<evidence type="ECO:0000255" key="1">
    <source>
        <dbReference type="PROSITE-ProRule" id="PRU00441"/>
    </source>
</evidence>
<evidence type="ECO:0000305" key="2"/>
<accession>P75369</accession>
<dbReference type="EMBL" id="U00089">
    <property type="protein sequence ID" value="AAB96071.1"/>
    <property type="molecule type" value="Genomic_DNA"/>
</dbReference>
<dbReference type="PIR" id="S73749">
    <property type="entry name" value="S73749"/>
</dbReference>
<dbReference type="RefSeq" id="NP_110105.1">
    <property type="nucleotide sequence ID" value="NC_000912.1"/>
</dbReference>
<dbReference type="RefSeq" id="WP_010874773.1">
    <property type="nucleotide sequence ID" value="NZ_OU342337.1"/>
</dbReference>
<dbReference type="SMR" id="P75369"/>
<dbReference type="STRING" id="272634.MPN_417"/>
<dbReference type="EnsemblBacteria" id="AAB96071">
    <property type="protein sequence ID" value="AAB96071"/>
    <property type="gene ID" value="MPN_417"/>
</dbReference>
<dbReference type="KEGG" id="mpn:MPN_417"/>
<dbReference type="PATRIC" id="fig|272634.6.peg.452"/>
<dbReference type="HOGENOM" id="CLU_479675_0_0_14"/>
<dbReference type="OrthoDB" id="401373at2"/>
<dbReference type="BioCyc" id="MPNE272634:G1GJ3-676-MONOMER"/>
<dbReference type="Proteomes" id="UP000000808">
    <property type="component" value="Chromosome"/>
</dbReference>
<dbReference type="GO" id="GO:0005886">
    <property type="term" value="C:plasma membrane"/>
    <property type="evidence" value="ECO:0007669"/>
    <property type="project" value="UniProtKB-SubCell"/>
</dbReference>
<dbReference type="GO" id="GO:0055085">
    <property type="term" value="P:transmembrane transport"/>
    <property type="evidence" value="ECO:0007669"/>
    <property type="project" value="InterPro"/>
</dbReference>
<dbReference type="Gene3D" id="1.10.3720.10">
    <property type="entry name" value="MetI-like"/>
    <property type="match status" value="1"/>
</dbReference>
<dbReference type="InterPro" id="IPR000515">
    <property type="entry name" value="MetI-like"/>
</dbReference>
<dbReference type="InterPro" id="IPR035906">
    <property type="entry name" value="MetI-like_sf"/>
</dbReference>
<dbReference type="PANTHER" id="PTHR30043:SF1">
    <property type="entry name" value="ABC TRANSPORT SYSTEM PERMEASE PROTEIN P69"/>
    <property type="match status" value="1"/>
</dbReference>
<dbReference type="PANTHER" id="PTHR30043">
    <property type="entry name" value="PHOSPHONATES TRANSPORT SYSTEM PERMEASE PROTEIN"/>
    <property type="match status" value="1"/>
</dbReference>
<dbReference type="SUPFAM" id="SSF161098">
    <property type="entry name" value="MetI-like"/>
    <property type="match status" value="2"/>
</dbReference>
<dbReference type="PROSITE" id="PS50928">
    <property type="entry name" value="ABC_TM1"/>
    <property type="match status" value="1"/>
</dbReference>
<protein>
    <recommendedName>
        <fullName>ABC transport system permease protein p69</fullName>
    </recommendedName>
</protein>
<gene>
    <name type="primary">p69</name>
    <name type="ordered locus">MPN_417</name>
    <name type="ORF">MP423</name>
</gene>
<organism>
    <name type="scientific">Mycoplasma pneumoniae (strain ATCC 29342 / M129 / Subtype 1)</name>
    <name type="common">Mycoplasmoides pneumoniae</name>
    <dbReference type="NCBI Taxonomy" id="272634"/>
    <lineage>
        <taxon>Bacteria</taxon>
        <taxon>Bacillati</taxon>
        <taxon>Mycoplasmatota</taxon>
        <taxon>Mycoplasmoidales</taxon>
        <taxon>Mycoplasmoidaceae</taxon>
        <taxon>Mycoplasmoides</taxon>
    </lineage>
</organism>
<feature type="chain" id="PRO_0000060170" description="ABC transport system permease protein p69">
    <location>
        <begin position="1"/>
        <end position="542"/>
    </location>
</feature>
<feature type="transmembrane region" description="Helical" evidence="1">
    <location>
        <begin position="23"/>
        <end position="43"/>
    </location>
</feature>
<feature type="transmembrane region" description="Helical" evidence="1">
    <location>
        <begin position="77"/>
        <end position="97"/>
    </location>
</feature>
<feature type="transmembrane region" description="Helical" evidence="1">
    <location>
        <begin position="114"/>
        <end position="134"/>
    </location>
</feature>
<feature type="transmembrane region" description="Helical" evidence="1">
    <location>
        <begin position="140"/>
        <end position="160"/>
    </location>
</feature>
<feature type="transmembrane region" description="Helical" evidence="1">
    <location>
        <begin position="212"/>
        <end position="232"/>
    </location>
</feature>
<feature type="transmembrane region" description="Helical" evidence="1">
    <location>
        <begin position="236"/>
        <end position="256"/>
    </location>
</feature>
<feature type="transmembrane region" description="Helical" evidence="1">
    <location>
        <begin position="287"/>
        <end position="307"/>
    </location>
</feature>
<feature type="transmembrane region" description="Helical" evidence="1">
    <location>
        <begin position="350"/>
        <end position="370"/>
    </location>
</feature>
<feature type="transmembrane region" description="Helical" evidence="1">
    <location>
        <begin position="386"/>
        <end position="406"/>
    </location>
</feature>
<feature type="transmembrane region" description="Helical" evidence="1">
    <location>
        <begin position="412"/>
        <end position="432"/>
    </location>
</feature>
<feature type="transmembrane region" description="Helical" evidence="1">
    <location>
        <begin position="481"/>
        <end position="501"/>
    </location>
</feature>
<feature type="transmembrane region" description="Helical" evidence="1">
    <location>
        <begin position="509"/>
        <end position="529"/>
    </location>
</feature>
<feature type="domain" description="ABC transmembrane type-1" evidence="1">
    <location>
        <begin position="349"/>
        <end position="526"/>
    </location>
</feature>
<reference key="1">
    <citation type="journal article" date="1996" name="Nucleic Acids Res.">
        <title>Complete sequence analysis of the genome of the bacterium Mycoplasma pneumoniae.</title>
        <authorList>
            <person name="Himmelreich R."/>
            <person name="Hilbert H."/>
            <person name="Plagens H."/>
            <person name="Pirkl E."/>
            <person name="Li B.-C."/>
            <person name="Herrmann R."/>
        </authorList>
    </citation>
    <scope>NUCLEOTIDE SEQUENCE [LARGE SCALE GENOMIC DNA]</scope>
    <source>
        <strain>ATCC 29342 / M129 / Subtype 1</strain>
    </source>
</reference>
<sequence>MTSLFFYQISDKQKRWNWYWKLALAIIVLVVIIYSFIDNFSGFNVSGFRNFSRNFIRLFTPDTARDYFLGSYLLQTIFYVVSGSILGFVIALWFSYLTAFKIQPLYIALPTRLFTIFLRSFPVLVFAFLFNNLFNKQLTATLTITWFSWLWSTKYITAFFENSALKQFFNQSSRYIHKFKAFWNTVVISQAERLWLFLLYSLEANFRWTTVLSIAGITGIGELIATPLGGTVQLNLVLIPMLTLIGFLLFLEASVFLLTKFVLQKQSQAGDYFLQAKTLQKRKWKKVMIYILALVLAAFTLANLVQLDYTVKAPGFVADFFKQFFQTKTAFLISEDANINPLLMLLKLTTQAISLITLVFVLALLFGFLASKLFSTITSISLKLLLLVIRVIPSVLLFRLFDPIIFRPETTIIFVLAIHSAASYGQLITINFDNANEGVINNMQNHGFSRFYILWNYLIPTTKPQLLNTLSDSFDNAIRDLVVFGIFGGSIIGGRINNFFERAQYSELGTITLPLMVYLMVFEVILMAVRLNKLKVWQRHLW</sequence>
<keyword id="KW-1003">Cell membrane</keyword>
<keyword id="KW-0472">Membrane</keyword>
<keyword id="KW-1185">Reference proteome</keyword>
<keyword id="KW-0677">Repeat</keyword>
<keyword id="KW-0812">Transmembrane</keyword>
<keyword id="KW-1133">Transmembrane helix</keyword>
<keyword id="KW-0813">Transport</keyword>
<comment type="function">
    <text>Probably part of a high-affinity transport system.</text>
</comment>
<comment type="subcellular location">
    <subcellularLocation>
        <location evidence="2">Cell membrane</location>
        <topology evidence="1">Multi-pass membrane protein</topology>
    </subcellularLocation>
</comment>
<comment type="domain">
    <text>Composed of two homologous domains.</text>
</comment>
<comment type="similarity">
    <text evidence="2">Belongs to the binding-protein-dependent transport system permease family.</text>
</comment>
<name>P69_MYCPN</name>
<proteinExistence type="inferred from homology"/>